<dbReference type="EMBL" id="CP000577">
    <property type="protein sequence ID" value="ABN76936.1"/>
    <property type="molecule type" value="Genomic_DNA"/>
</dbReference>
<dbReference type="RefSeq" id="WP_002720341.1">
    <property type="nucleotide sequence ID" value="NC_009049.1"/>
</dbReference>
<dbReference type="SMR" id="A3PKS0"/>
<dbReference type="GeneID" id="67446945"/>
<dbReference type="KEGG" id="rsh:Rsph17029_1829"/>
<dbReference type="HOGENOM" id="CLU_014218_8_2_5"/>
<dbReference type="GO" id="GO:0009376">
    <property type="term" value="C:HslUV protease complex"/>
    <property type="evidence" value="ECO:0007669"/>
    <property type="project" value="TreeGrafter"/>
</dbReference>
<dbReference type="GO" id="GO:0005524">
    <property type="term" value="F:ATP binding"/>
    <property type="evidence" value="ECO:0007669"/>
    <property type="project" value="UniProtKB-UniRule"/>
</dbReference>
<dbReference type="GO" id="GO:0016887">
    <property type="term" value="F:ATP hydrolysis activity"/>
    <property type="evidence" value="ECO:0007669"/>
    <property type="project" value="InterPro"/>
</dbReference>
<dbReference type="GO" id="GO:0140662">
    <property type="term" value="F:ATP-dependent protein folding chaperone"/>
    <property type="evidence" value="ECO:0007669"/>
    <property type="project" value="InterPro"/>
</dbReference>
<dbReference type="GO" id="GO:0046983">
    <property type="term" value="F:protein dimerization activity"/>
    <property type="evidence" value="ECO:0007669"/>
    <property type="project" value="InterPro"/>
</dbReference>
<dbReference type="GO" id="GO:0051082">
    <property type="term" value="F:unfolded protein binding"/>
    <property type="evidence" value="ECO:0007669"/>
    <property type="project" value="UniProtKB-UniRule"/>
</dbReference>
<dbReference type="GO" id="GO:0008270">
    <property type="term" value="F:zinc ion binding"/>
    <property type="evidence" value="ECO:0007669"/>
    <property type="project" value="InterPro"/>
</dbReference>
<dbReference type="GO" id="GO:0051301">
    <property type="term" value="P:cell division"/>
    <property type="evidence" value="ECO:0007669"/>
    <property type="project" value="TreeGrafter"/>
</dbReference>
<dbReference type="GO" id="GO:0051603">
    <property type="term" value="P:proteolysis involved in protein catabolic process"/>
    <property type="evidence" value="ECO:0007669"/>
    <property type="project" value="TreeGrafter"/>
</dbReference>
<dbReference type="CDD" id="cd19497">
    <property type="entry name" value="RecA-like_ClpX"/>
    <property type="match status" value="1"/>
</dbReference>
<dbReference type="FunFam" id="1.10.8.60:FF:000002">
    <property type="entry name" value="ATP-dependent Clp protease ATP-binding subunit ClpX"/>
    <property type="match status" value="1"/>
</dbReference>
<dbReference type="FunFam" id="3.40.50.300:FF:000005">
    <property type="entry name" value="ATP-dependent Clp protease ATP-binding subunit ClpX"/>
    <property type="match status" value="1"/>
</dbReference>
<dbReference type="Gene3D" id="1.10.8.60">
    <property type="match status" value="1"/>
</dbReference>
<dbReference type="Gene3D" id="6.20.220.10">
    <property type="entry name" value="ClpX chaperone, C4-type zinc finger domain"/>
    <property type="match status" value="1"/>
</dbReference>
<dbReference type="Gene3D" id="3.40.50.300">
    <property type="entry name" value="P-loop containing nucleotide triphosphate hydrolases"/>
    <property type="match status" value="1"/>
</dbReference>
<dbReference type="HAMAP" id="MF_00175">
    <property type="entry name" value="ClpX"/>
    <property type="match status" value="1"/>
</dbReference>
<dbReference type="InterPro" id="IPR003593">
    <property type="entry name" value="AAA+_ATPase"/>
</dbReference>
<dbReference type="InterPro" id="IPR050052">
    <property type="entry name" value="ATP-dep_Clp_protease_ClpX"/>
</dbReference>
<dbReference type="InterPro" id="IPR003959">
    <property type="entry name" value="ATPase_AAA_core"/>
</dbReference>
<dbReference type="InterPro" id="IPR019489">
    <property type="entry name" value="Clp_ATPase_C"/>
</dbReference>
<dbReference type="InterPro" id="IPR004487">
    <property type="entry name" value="Clp_protease_ATP-bd_su_ClpX"/>
</dbReference>
<dbReference type="InterPro" id="IPR046425">
    <property type="entry name" value="ClpX_bact"/>
</dbReference>
<dbReference type="InterPro" id="IPR027417">
    <property type="entry name" value="P-loop_NTPase"/>
</dbReference>
<dbReference type="InterPro" id="IPR010603">
    <property type="entry name" value="Znf_CppX_C4"/>
</dbReference>
<dbReference type="InterPro" id="IPR038366">
    <property type="entry name" value="Znf_CppX_C4_sf"/>
</dbReference>
<dbReference type="NCBIfam" id="TIGR00382">
    <property type="entry name" value="clpX"/>
    <property type="match status" value="1"/>
</dbReference>
<dbReference type="NCBIfam" id="NF003745">
    <property type="entry name" value="PRK05342.1"/>
    <property type="match status" value="1"/>
</dbReference>
<dbReference type="PANTHER" id="PTHR48102:SF7">
    <property type="entry name" value="ATP-DEPENDENT CLP PROTEASE ATP-BINDING SUBUNIT CLPX-LIKE, MITOCHONDRIAL"/>
    <property type="match status" value="1"/>
</dbReference>
<dbReference type="PANTHER" id="PTHR48102">
    <property type="entry name" value="ATP-DEPENDENT CLP PROTEASE ATP-BINDING SUBUNIT CLPX-LIKE, MITOCHONDRIAL-RELATED"/>
    <property type="match status" value="1"/>
</dbReference>
<dbReference type="Pfam" id="PF07724">
    <property type="entry name" value="AAA_2"/>
    <property type="match status" value="1"/>
</dbReference>
<dbReference type="Pfam" id="PF10431">
    <property type="entry name" value="ClpB_D2-small"/>
    <property type="match status" value="1"/>
</dbReference>
<dbReference type="Pfam" id="PF06689">
    <property type="entry name" value="zf-C4_ClpX"/>
    <property type="match status" value="1"/>
</dbReference>
<dbReference type="SMART" id="SM00382">
    <property type="entry name" value="AAA"/>
    <property type="match status" value="1"/>
</dbReference>
<dbReference type="SMART" id="SM01086">
    <property type="entry name" value="ClpB_D2-small"/>
    <property type="match status" value="1"/>
</dbReference>
<dbReference type="SMART" id="SM00994">
    <property type="entry name" value="zf-C4_ClpX"/>
    <property type="match status" value="1"/>
</dbReference>
<dbReference type="SUPFAM" id="SSF57716">
    <property type="entry name" value="Glucocorticoid receptor-like (DNA-binding domain)"/>
    <property type="match status" value="1"/>
</dbReference>
<dbReference type="SUPFAM" id="SSF52540">
    <property type="entry name" value="P-loop containing nucleoside triphosphate hydrolases"/>
    <property type="match status" value="1"/>
</dbReference>
<dbReference type="PROSITE" id="PS51902">
    <property type="entry name" value="CLPX_ZB"/>
    <property type="match status" value="1"/>
</dbReference>
<reference key="1">
    <citation type="submission" date="2007-02" db="EMBL/GenBank/DDBJ databases">
        <title>Complete sequence of chromosome 1 of Rhodobacter sphaeroides ATCC 17029.</title>
        <authorList>
            <person name="Copeland A."/>
            <person name="Lucas S."/>
            <person name="Lapidus A."/>
            <person name="Barry K."/>
            <person name="Detter J.C."/>
            <person name="Glavina del Rio T."/>
            <person name="Hammon N."/>
            <person name="Israni S."/>
            <person name="Dalin E."/>
            <person name="Tice H."/>
            <person name="Pitluck S."/>
            <person name="Kiss H."/>
            <person name="Brettin T."/>
            <person name="Bruce D."/>
            <person name="Han C."/>
            <person name="Tapia R."/>
            <person name="Gilna P."/>
            <person name="Schmutz J."/>
            <person name="Larimer F."/>
            <person name="Land M."/>
            <person name="Hauser L."/>
            <person name="Kyrpides N."/>
            <person name="Mikhailova N."/>
            <person name="Richardson P."/>
            <person name="Mackenzie C."/>
            <person name="Choudhary M."/>
            <person name="Donohue T.J."/>
            <person name="Kaplan S."/>
        </authorList>
    </citation>
    <scope>NUCLEOTIDE SEQUENCE [LARGE SCALE GENOMIC DNA]</scope>
    <source>
        <strain>ATCC 17029 / ATH 2.4.9</strain>
    </source>
</reference>
<proteinExistence type="inferred from homology"/>
<sequence>MANNTGSDSKNTLYCSFCGKSQHEVRKLIAGPTVFICDECVELCMDIIREETKSTGLKSADGVPTPREICKVLDDYVIGQMHAKRVLSVAVHNHYKRLNHSSKTDIELSKSNILLIGPTGCGKTLLAQTLARILDVPFTMADATTLTEAGYVGEDVENIILKLLQASEYNVERAQRGIVYIDEVDKITRKSDNPSITRDVSGEGVQQALLKIMEGTVASVPPQGGRKHPQQEFLQVDTTNILFICGGAFAGLEKIIAQRGKGSGIGFGAEVKDPDARGVGELFKELEPEDLLKFGLIPEFVGRLPVIATLTDLDEAALVTILTEPKNALVKQYQRLFEIEGVKLTFTADALTAIAKRAIKRKTGARGLRSIMEDILLDTMFELPGLEGVEEVVVNEEAVNSGAKPLLIYTEVTKKKDATAS</sequence>
<accession>A3PKS0</accession>
<organism>
    <name type="scientific">Cereibacter sphaeroides (strain ATCC 17029 / ATH 2.4.9)</name>
    <name type="common">Rhodobacter sphaeroides</name>
    <dbReference type="NCBI Taxonomy" id="349101"/>
    <lineage>
        <taxon>Bacteria</taxon>
        <taxon>Pseudomonadati</taxon>
        <taxon>Pseudomonadota</taxon>
        <taxon>Alphaproteobacteria</taxon>
        <taxon>Rhodobacterales</taxon>
        <taxon>Paracoccaceae</taxon>
        <taxon>Cereibacter</taxon>
    </lineage>
</organism>
<keyword id="KW-0067">ATP-binding</keyword>
<keyword id="KW-0143">Chaperone</keyword>
<keyword id="KW-0479">Metal-binding</keyword>
<keyword id="KW-0547">Nucleotide-binding</keyword>
<keyword id="KW-0862">Zinc</keyword>
<gene>
    <name evidence="1" type="primary">clpX</name>
    <name type="ordered locus">Rsph17029_1829</name>
</gene>
<comment type="function">
    <text evidence="1">ATP-dependent specificity component of the Clp protease. It directs the protease to specific substrates. Can perform chaperone functions in the absence of ClpP.</text>
</comment>
<comment type="subunit">
    <text evidence="1">Component of the ClpX-ClpP complex. Forms a hexameric ring that, in the presence of ATP, binds to fourteen ClpP subunits assembled into a disk-like structure with a central cavity, resembling the structure of eukaryotic proteasomes.</text>
</comment>
<comment type="similarity">
    <text evidence="1">Belongs to the ClpX chaperone family.</text>
</comment>
<evidence type="ECO:0000255" key="1">
    <source>
        <dbReference type="HAMAP-Rule" id="MF_00175"/>
    </source>
</evidence>
<evidence type="ECO:0000255" key="2">
    <source>
        <dbReference type="PROSITE-ProRule" id="PRU01250"/>
    </source>
</evidence>
<name>CLPX_CERS1</name>
<protein>
    <recommendedName>
        <fullName evidence="1">ATP-dependent Clp protease ATP-binding subunit ClpX</fullName>
    </recommendedName>
</protein>
<feature type="chain" id="PRO_1000024638" description="ATP-dependent Clp protease ATP-binding subunit ClpX">
    <location>
        <begin position="1"/>
        <end position="421"/>
    </location>
</feature>
<feature type="domain" description="ClpX-type ZB" evidence="2">
    <location>
        <begin position="3"/>
        <end position="56"/>
    </location>
</feature>
<feature type="binding site" evidence="2">
    <location>
        <position position="15"/>
    </location>
    <ligand>
        <name>Zn(2+)</name>
        <dbReference type="ChEBI" id="CHEBI:29105"/>
    </ligand>
</feature>
<feature type="binding site" evidence="2">
    <location>
        <position position="18"/>
    </location>
    <ligand>
        <name>Zn(2+)</name>
        <dbReference type="ChEBI" id="CHEBI:29105"/>
    </ligand>
</feature>
<feature type="binding site" evidence="2">
    <location>
        <position position="37"/>
    </location>
    <ligand>
        <name>Zn(2+)</name>
        <dbReference type="ChEBI" id="CHEBI:29105"/>
    </ligand>
</feature>
<feature type="binding site" evidence="2">
    <location>
        <position position="40"/>
    </location>
    <ligand>
        <name>Zn(2+)</name>
        <dbReference type="ChEBI" id="CHEBI:29105"/>
    </ligand>
</feature>
<feature type="binding site" evidence="1">
    <location>
        <begin position="118"/>
        <end position="125"/>
    </location>
    <ligand>
        <name>ATP</name>
        <dbReference type="ChEBI" id="CHEBI:30616"/>
    </ligand>
</feature>